<evidence type="ECO:0000255" key="1">
    <source>
        <dbReference type="HAMAP-Rule" id="MF_01302"/>
    </source>
</evidence>
<evidence type="ECO:0000305" key="2"/>
<reference key="1">
    <citation type="submission" date="2002-12" db="EMBL/GenBank/DDBJ databases">
        <title>Complete genome sequence of Vibrio vulnificus CMCP6.</title>
        <authorList>
            <person name="Rhee J.H."/>
            <person name="Kim S.Y."/>
            <person name="Chung S.S."/>
            <person name="Kim J.J."/>
            <person name="Moon Y.H."/>
            <person name="Jeong H."/>
            <person name="Choy H.E."/>
        </authorList>
    </citation>
    <scope>NUCLEOTIDE SEQUENCE [LARGE SCALE GENOMIC DNA]</scope>
    <source>
        <strain>CMCP6</strain>
    </source>
</reference>
<protein>
    <recommendedName>
        <fullName evidence="1">Small ribosomal subunit protein uS8</fullName>
    </recommendedName>
    <alternativeName>
        <fullName evidence="2">30S ribosomal protein S8</fullName>
    </alternativeName>
</protein>
<keyword id="KW-0687">Ribonucleoprotein</keyword>
<keyword id="KW-0689">Ribosomal protein</keyword>
<keyword id="KW-0694">RNA-binding</keyword>
<keyword id="KW-0699">rRNA-binding</keyword>
<gene>
    <name evidence="1" type="primary">rpsH</name>
    <name type="ordered locus">VV1_0746</name>
</gene>
<proteinExistence type="inferred from homology"/>
<accession>Q8DE54</accession>
<feature type="chain" id="PRO_0000126522" description="Small ribosomal subunit protein uS8">
    <location>
        <begin position="1"/>
        <end position="130"/>
    </location>
</feature>
<comment type="function">
    <text evidence="1">One of the primary rRNA binding proteins, it binds directly to 16S rRNA central domain where it helps coordinate assembly of the platform of the 30S subunit.</text>
</comment>
<comment type="subunit">
    <text evidence="1">Part of the 30S ribosomal subunit. Contacts proteins S5 and S12.</text>
</comment>
<comment type="similarity">
    <text evidence="1">Belongs to the universal ribosomal protein uS8 family.</text>
</comment>
<dbReference type="EMBL" id="AE016795">
    <property type="protein sequence ID" value="AAO09255.1"/>
    <property type="molecule type" value="Genomic_DNA"/>
</dbReference>
<dbReference type="RefSeq" id="WP_011078819.1">
    <property type="nucleotide sequence ID" value="NC_004459.3"/>
</dbReference>
<dbReference type="SMR" id="Q8DE54"/>
<dbReference type="GeneID" id="93895052"/>
<dbReference type="KEGG" id="vvu:VV1_0746"/>
<dbReference type="HOGENOM" id="CLU_098428_0_0_6"/>
<dbReference type="Proteomes" id="UP000002275">
    <property type="component" value="Chromosome 1"/>
</dbReference>
<dbReference type="GO" id="GO:1990904">
    <property type="term" value="C:ribonucleoprotein complex"/>
    <property type="evidence" value="ECO:0007669"/>
    <property type="project" value="UniProtKB-KW"/>
</dbReference>
<dbReference type="GO" id="GO:0005840">
    <property type="term" value="C:ribosome"/>
    <property type="evidence" value="ECO:0007669"/>
    <property type="project" value="UniProtKB-KW"/>
</dbReference>
<dbReference type="GO" id="GO:0019843">
    <property type="term" value="F:rRNA binding"/>
    <property type="evidence" value="ECO:0007669"/>
    <property type="project" value="UniProtKB-UniRule"/>
</dbReference>
<dbReference type="GO" id="GO:0003735">
    <property type="term" value="F:structural constituent of ribosome"/>
    <property type="evidence" value="ECO:0007669"/>
    <property type="project" value="InterPro"/>
</dbReference>
<dbReference type="GO" id="GO:0006412">
    <property type="term" value="P:translation"/>
    <property type="evidence" value="ECO:0007669"/>
    <property type="project" value="UniProtKB-UniRule"/>
</dbReference>
<dbReference type="FunFam" id="3.30.1370.30:FF:000003">
    <property type="entry name" value="30S ribosomal protein S8"/>
    <property type="match status" value="1"/>
</dbReference>
<dbReference type="FunFam" id="3.30.1490.10:FF:000001">
    <property type="entry name" value="30S ribosomal protein S8"/>
    <property type="match status" value="1"/>
</dbReference>
<dbReference type="Gene3D" id="3.30.1370.30">
    <property type="match status" value="1"/>
</dbReference>
<dbReference type="Gene3D" id="3.30.1490.10">
    <property type="match status" value="1"/>
</dbReference>
<dbReference type="HAMAP" id="MF_01302_B">
    <property type="entry name" value="Ribosomal_uS8_B"/>
    <property type="match status" value="1"/>
</dbReference>
<dbReference type="InterPro" id="IPR000630">
    <property type="entry name" value="Ribosomal_uS8"/>
</dbReference>
<dbReference type="InterPro" id="IPR047863">
    <property type="entry name" value="Ribosomal_uS8_CS"/>
</dbReference>
<dbReference type="InterPro" id="IPR035987">
    <property type="entry name" value="Ribosomal_uS8_sf"/>
</dbReference>
<dbReference type="NCBIfam" id="NF001109">
    <property type="entry name" value="PRK00136.1"/>
    <property type="match status" value="1"/>
</dbReference>
<dbReference type="PANTHER" id="PTHR11758">
    <property type="entry name" value="40S RIBOSOMAL PROTEIN S15A"/>
    <property type="match status" value="1"/>
</dbReference>
<dbReference type="Pfam" id="PF00410">
    <property type="entry name" value="Ribosomal_S8"/>
    <property type="match status" value="1"/>
</dbReference>
<dbReference type="SUPFAM" id="SSF56047">
    <property type="entry name" value="Ribosomal protein S8"/>
    <property type="match status" value="1"/>
</dbReference>
<dbReference type="PROSITE" id="PS00053">
    <property type="entry name" value="RIBOSOMAL_S8"/>
    <property type="match status" value="1"/>
</dbReference>
<name>RS8_VIBVU</name>
<organism>
    <name type="scientific">Vibrio vulnificus (strain CMCP6)</name>
    <dbReference type="NCBI Taxonomy" id="216895"/>
    <lineage>
        <taxon>Bacteria</taxon>
        <taxon>Pseudomonadati</taxon>
        <taxon>Pseudomonadota</taxon>
        <taxon>Gammaproteobacteria</taxon>
        <taxon>Vibrionales</taxon>
        <taxon>Vibrionaceae</taxon>
        <taxon>Vibrio</taxon>
    </lineage>
</organism>
<sequence>MSMQDPISDMLTRIRNGQAANKVAVKMPSSKLKVAIAALLKAEGYIVDFAVEGEAKPELEVTLKYFQAKPVIEQLKRVSRPGLRVYKKKDDLPSVMGGLGVAVVSTSKGLMSDRAARKAGLGGEIICYVA</sequence>